<keyword id="KW-0975">Bacterial flagellum</keyword>
<keyword id="KW-0574">Periplasm</keyword>
<keyword id="KW-0732">Signal</keyword>
<feature type="signal peptide" evidence="1">
    <location>
        <begin position="1"/>
        <end position="20"/>
    </location>
</feature>
<feature type="chain" id="PRO_5000128727" description="Flagellar P-ring protein">
    <location>
        <begin position="21"/>
        <end position="363"/>
    </location>
</feature>
<evidence type="ECO:0000255" key="1">
    <source>
        <dbReference type="HAMAP-Rule" id="MF_00416"/>
    </source>
</evidence>
<reference key="1">
    <citation type="submission" date="2006-08" db="EMBL/GenBank/DDBJ databases">
        <title>Complete sequence of chromosome 1 of Shewanella sp. MR-7.</title>
        <authorList>
            <person name="Copeland A."/>
            <person name="Lucas S."/>
            <person name="Lapidus A."/>
            <person name="Barry K."/>
            <person name="Detter J.C."/>
            <person name="Glavina del Rio T."/>
            <person name="Hammon N."/>
            <person name="Israni S."/>
            <person name="Dalin E."/>
            <person name="Tice H."/>
            <person name="Pitluck S."/>
            <person name="Kiss H."/>
            <person name="Brettin T."/>
            <person name="Bruce D."/>
            <person name="Han C."/>
            <person name="Tapia R."/>
            <person name="Gilna P."/>
            <person name="Schmutz J."/>
            <person name="Larimer F."/>
            <person name="Land M."/>
            <person name="Hauser L."/>
            <person name="Kyrpides N."/>
            <person name="Mikhailova N."/>
            <person name="Nealson K."/>
            <person name="Konstantinidis K."/>
            <person name="Klappenbach J."/>
            <person name="Tiedje J."/>
            <person name="Richardson P."/>
        </authorList>
    </citation>
    <scope>NUCLEOTIDE SEQUENCE [LARGE SCALE GENOMIC DNA]</scope>
    <source>
        <strain>MR-7</strain>
    </source>
</reference>
<sequence length="363" mass="38323">MKLKLILAVAMLAFSLPSQAERIKDIANVQGVRNNQLIGYGLVVGLPGTGEKTRYTEQTFTTMLKNFGINLPDNFRPKIKNVAVVAVHADMPAFIKPGQELDVTVSSLGEAKSLRGGTLLQTFLKGVDGNVYAIAQGSLVVSGFSADGLDGSKVIQNTPTVGRIPNGAIVERSVATPFSTGDYLTFNLRRSDFSTAQRMADAINDLLGPDMARPLDATSVQVSAPRDVSQRVSFLATLENIEVEPADESAKVIVNSRTGTIVVGQNVKLLPAAVTHGGLTVTIAEATQVSQPNALANGQTTVTSNSTINASESNRRMFMFNPGTTLDELVRAVNLVGAAPSDVLAILEALKVAGALHGELIII</sequence>
<protein>
    <recommendedName>
        <fullName evidence="1">Flagellar P-ring protein</fullName>
    </recommendedName>
    <alternativeName>
        <fullName evidence="1">Basal body P-ring protein</fullName>
    </alternativeName>
</protein>
<gene>
    <name evidence="1" type="primary">flgI</name>
    <name type="ordered locus">Shewmr7_1336</name>
</gene>
<organism>
    <name type="scientific">Shewanella sp. (strain MR-7)</name>
    <dbReference type="NCBI Taxonomy" id="60481"/>
    <lineage>
        <taxon>Bacteria</taxon>
        <taxon>Pseudomonadati</taxon>
        <taxon>Pseudomonadota</taxon>
        <taxon>Gammaproteobacteria</taxon>
        <taxon>Alteromonadales</taxon>
        <taxon>Shewanellaceae</taxon>
        <taxon>Shewanella</taxon>
    </lineage>
</organism>
<name>FLGI_SHESR</name>
<dbReference type="EMBL" id="CP000444">
    <property type="protein sequence ID" value="ABI42335.1"/>
    <property type="molecule type" value="Genomic_DNA"/>
</dbReference>
<dbReference type="SMR" id="Q0HX20"/>
<dbReference type="KEGG" id="shm:Shewmr7_1336"/>
<dbReference type="HOGENOM" id="CLU_045235_1_0_6"/>
<dbReference type="GO" id="GO:0009428">
    <property type="term" value="C:bacterial-type flagellum basal body, distal rod, P ring"/>
    <property type="evidence" value="ECO:0007669"/>
    <property type="project" value="InterPro"/>
</dbReference>
<dbReference type="GO" id="GO:0030288">
    <property type="term" value="C:outer membrane-bounded periplasmic space"/>
    <property type="evidence" value="ECO:0007669"/>
    <property type="project" value="InterPro"/>
</dbReference>
<dbReference type="GO" id="GO:0005198">
    <property type="term" value="F:structural molecule activity"/>
    <property type="evidence" value="ECO:0007669"/>
    <property type="project" value="InterPro"/>
</dbReference>
<dbReference type="GO" id="GO:0071973">
    <property type="term" value="P:bacterial-type flagellum-dependent cell motility"/>
    <property type="evidence" value="ECO:0007669"/>
    <property type="project" value="InterPro"/>
</dbReference>
<dbReference type="HAMAP" id="MF_00416">
    <property type="entry name" value="FlgI"/>
    <property type="match status" value="1"/>
</dbReference>
<dbReference type="InterPro" id="IPR001782">
    <property type="entry name" value="Flag_FlgI"/>
</dbReference>
<dbReference type="NCBIfam" id="NF003676">
    <property type="entry name" value="PRK05303.1"/>
    <property type="match status" value="1"/>
</dbReference>
<dbReference type="PANTHER" id="PTHR30381">
    <property type="entry name" value="FLAGELLAR P-RING PERIPLASMIC PROTEIN FLGI"/>
    <property type="match status" value="1"/>
</dbReference>
<dbReference type="PANTHER" id="PTHR30381:SF0">
    <property type="entry name" value="FLAGELLAR P-RING PROTEIN"/>
    <property type="match status" value="1"/>
</dbReference>
<dbReference type="Pfam" id="PF02119">
    <property type="entry name" value="FlgI"/>
    <property type="match status" value="1"/>
</dbReference>
<dbReference type="PRINTS" id="PR01010">
    <property type="entry name" value="FLGPRINGFLGI"/>
</dbReference>
<proteinExistence type="inferred from homology"/>
<accession>Q0HX20</accession>
<comment type="function">
    <text evidence="1">Assembles around the rod to form the L-ring and probably protects the motor/basal body from shearing forces during rotation.</text>
</comment>
<comment type="subunit">
    <text evidence="1">The basal body constitutes a major portion of the flagellar organelle and consists of four rings (L,P,S, and M) mounted on a central rod.</text>
</comment>
<comment type="subcellular location">
    <subcellularLocation>
        <location evidence="1">Periplasm</location>
    </subcellularLocation>
    <subcellularLocation>
        <location evidence="1">Bacterial flagellum basal body</location>
    </subcellularLocation>
</comment>
<comment type="similarity">
    <text evidence="1">Belongs to the FlgI family.</text>
</comment>